<reference key="1">
    <citation type="thesis" date="1993" institute="Ludwig-Maximilians University / Munich" country="Germany">
        <title>Representation and characterization of pancreatic secretory proteinase inhibitors from various animal species.</title>
        <authorList>
            <person name="Voit J."/>
        </authorList>
    </citation>
    <scope>PROTEIN SEQUENCE</scope>
    <source>
        <tissue>Pancreas</tissue>
    </source>
</reference>
<proteinExistence type="evidence at protein level"/>
<comment type="function">
    <text evidence="1">Serine protease inhibitor which exhibits anti-trypsin activity. In the pancreas, protects against trypsin-catalyzed premature activation of zymogens.</text>
</comment>
<comment type="function">
    <text evidence="1">In the male reproductive tract, binds to sperm heads where it modulates sperm capacitance by inhibiting calcium uptake and nitrogen oxide (NO) production.</text>
</comment>
<comment type="subcellular location">
    <subcellularLocation>
        <location evidence="1">Secreted</location>
    </subcellularLocation>
</comment>
<name>ISK1_HORSE</name>
<gene>
    <name type="primary">SPINK1</name>
    <name type="synonym">PSTI</name>
</gene>
<dbReference type="SMR" id="P81634"/>
<dbReference type="FunCoup" id="P81634">
    <property type="interactions" value="18"/>
</dbReference>
<dbReference type="STRING" id="9796.ENSECAP00000010304"/>
<dbReference type="PaxDb" id="9796-ENSECAP00000010304"/>
<dbReference type="HOGENOM" id="CLU_169765_6_0_1"/>
<dbReference type="InParanoid" id="P81634"/>
<dbReference type="Proteomes" id="UP000002281">
    <property type="component" value="Unplaced"/>
</dbReference>
<dbReference type="GO" id="GO:0005576">
    <property type="term" value="C:extracellular region"/>
    <property type="evidence" value="ECO:0007669"/>
    <property type="project" value="UniProtKB-SubCell"/>
</dbReference>
<dbReference type="GO" id="GO:0004867">
    <property type="term" value="F:serine-type endopeptidase inhibitor activity"/>
    <property type="evidence" value="ECO:0007669"/>
    <property type="project" value="UniProtKB-KW"/>
</dbReference>
<dbReference type="CDD" id="cd01327">
    <property type="entry name" value="KAZAL_PSTI"/>
    <property type="match status" value="1"/>
</dbReference>
<dbReference type="FunFam" id="3.30.60.30:FF:000031">
    <property type="entry name" value="Serine protease inhibitor Kazal-type 2"/>
    <property type="match status" value="1"/>
</dbReference>
<dbReference type="Gene3D" id="3.30.60.30">
    <property type="match status" value="1"/>
</dbReference>
<dbReference type="InterPro" id="IPR002350">
    <property type="entry name" value="Kazal_dom"/>
</dbReference>
<dbReference type="InterPro" id="IPR036058">
    <property type="entry name" value="Kazal_dom_sf"/>
</dbReference>
<dbReference type="InterPro" id="IPR001239">
    <property type="entry name" value="Prot_inh_Kazal-m"/>
</dbReference>
<dbReference type="PANTHER" id="PTHR21312">
    <property type="entry name" value="SERINE PROTEASE INHIBITOR"/>
    <property type="match status" value="1"/>
</dbReference>
<dbReference type="PANTHER" id="PTHR21312:SF27">
    <property type="entry name" value="SERINE PROTEASE INHIBITOR KAZAL-TYPE 1"/>
    <property type="match status" value="1"/>
</dbReference>
<dbReference type="Pfam" id="PF00050">
    <property type="entry name" value="Kazal_1"/>
    <property type="match status" value="1"/>
</dbReference>
<dbReference type="PRINTS" id="PR00290">
    <property type="entry name" value="KAZALINHBTR"/>
</dbReference>
<dbReference type="SMART" id="SM00280">
    <property type="entry name" value="KAZAL"/>
    <property type="match status" value="1"/>
</dbReference>
<dbReference type="SUPFAM" id="SSF100895">
    <property type="entry name" value="Kazal-type serine protease inhibitors"/>
    <property type="match status" value="1"/>
</dbReference>
<dbReference type="PROSITE" id="PS00282">
    <property type="entry name" value="KAZAL_1"/>
    <property type="match status" value="1"/>
</dbReference>
<dbReference type="PROSITE" id="PS51465">
    <property type="entry name" value="KAZAL_2"/>
    <property type="match status" value="1"/>
</dbReference>
<feature type="chain" id="PRO_0000073025" description="Serine protease inhibitor Kazal-type 1">
    <location>
        <begin position="1"/>
        <end position="56"/>
    </location>
</feature>
<feature type="domain" description="Kazal-like" evidence="2">
    <location>
        <begin position="3"/>
        <end position="56"/>
    </location>
</feature>
<feature type="site" description="Reactive bond for trypsin" evidence="1 2">
    <location>
        <begin position="18"/>
        <end position="19"/>
    </location>
</feature>
<feature type="site" description="Necessary for sperm binding" evidence="1">
    <location>
        <begin position="20"/>
        <end position="21"/>
    </location>
</feature>
<feature type="disulfide bond" evidence="2">
    <location>
        <begin position="9"/>
        <end position="38"/>
    </location>
</feature>
<feature type="disulfide bond" evidence="2">
    <location>
        <begin position="16"/>
        <end position="35"/>
    </location>
</feature>
<feature type="disulfide bond" evidence="2">
    <location>
        <begin position="24"/>
        <end position="56"/>
    </location>
</feature>
<organism>
    <name type="scientific">Equus caballus</name>
    <name type="common">Horse</name>
    <dbReference type="NCBI Taxonomy" id="9796"/>
    <lineage>
        <taxon>Eukaryota</taxon>
        <taxon>Metazoa</taxon>
        <taxon>Chordata</taxon>
        <taxon>Craniata</taxon>
        <taxon>Vertebrata</taxon>
        <taxon>Euteleostomi</taxon>
        <taxon>Mammalia</taxon>
        <taxon>Eutheria</taxon>
        <taxon>Laurasiatheria</taxon>
        <taxon>Perissodactyla</taxon>
        <taxon>Equidae</taxon>
        <taxon>Equus</taxon>
    </lineage>
</organism>
<sequence length="56" mass="6093">DSLGREAKCNNNAGGCTKIYNPVCGTDGNTYPNECMLCVENQKRQMPVLIQRSGPC</sequence>
<keyword id="KW-0903">Direct protein sequencing</keyword>
<keyword id="KW-1015">Disulfide bond</keyword>
<keyword id="KW-0646">Protease inhibitor</keyword>
<keyword id="KW-1185">Reference proteome</keyword>
<keyword id="KW-0964">Secreted</keyword>
<keyword id="KW-0722">Serine protease inhibitor</keyword>
<accession>P81634</accession>
<evidence type="ECO:0000250" key="1">
    <source>
        <dbReference type="UniProtKB" id="P09036"/>
    </source>
</evidence>
<evidence type="ECO:0000255" key="2">
    <source>
        <dbReference type="PROSITE-ProRule" id="PRU00798"/>
    </source>
</evidence>
<protein>
    <recommendedName>
        <fullName evidence="1">Serine protease inhibitor Kazal-type 1</fullName>
    </recommendedName>
    <alternativeName>
        <fullName evidence="1">Pancreatic secretory trypsin inhibitor</fullName>
    </alternativeName>
</protein>